<feature type="chain" id="PRO_1000071459" description="Elongation factor P">
    <location>
        <begin position="1"/>
        <end position="191"/>
    </location>
</feature>
<feature type="modified residue" description="N6-(3,6-diaminohexanoyl)-5-hydroxylysine" evidence="1">
    <location>
        <position position="34"/>
    </location>
</feature>
<comment type="function">
    <text evidence="1">Involved in peptide bond synthesis. Alleviates ribosome stalling that occurs when 3 or more consecutive Pro residues or the sequence PPG is present in a protein, possibly by augmenting the peptidyl transferase activity of the ribosome. Modification of Lys-34 is required for alleviation.</text>
</comment>
<comment type="pathway">
    <text evidence="1">Protein biosynthesis; polypeptide chain elongation.</text>
</comment>
<comment type="subcellular location">
    <subcellularLocation>
        <location evidence="1">Cytoplasm</location>
    </subcellularLocation>
</comment>
<comment type="PTM">
    <text evidence="1">May be beta-lysylated on the epsilon-amino group of Lys-34 by the combined action of EpmA and EpmB, and then hydroxylated on the C5 position of the same residue by EpmC (if this protein is present). Lysylation is critical for the stimulatory effect of EF-P on peptide-bond formation. The lysylation moiety may extend toward the peptidyltransferase center and stabilize the terminal 3-CCA end of the tRNA. Hydroxylation of the C5 position on Lys-34 may allow additional potential stabilizing hydrogen-bond interactions with the P-tRNA.</text>
</comment>
<comment type="similarity">
    <text evidence="1">Belongs to the elongation factor P family.</text>
</comment>
<reference key="1">
    <citation type="submission" date="2007-05" db="EMBL/GenBank/DDBJ databases">
        <title>Complete sequence of chromosome of Psychrobacter sp. PRwf-1.</title>
        <authorList>
            <consortium name="US DOE Joint Genome Institute"/>
            <person name="Copeland A."/>
            <person name="Lucas S."/>
            <person name="Lapidus A."/>
            <person name="Barry K."/>
            <person name="Detter J.C."/>
            <person name="Glavina del Rio T."/>
            <person name="Hammon N."/>
            <person name="Israni S."/>
            <person name="Dalin E."/>
            <person name="Tice H."/>
            <person name="Pitluck S."/>
            <person name="Chain P."/>
            <person name="Malfatti S."/>
            <person name="Shin M."/>
            <person name="Vergez L."/>
            <person name="Schmutz J."/>
            <person name="Larimer F."/>
            <person name="Land M."/>
            <person name="Hauser L."/>
            <person name="Kyrpides N."/>
            <person name="Kim E."/>
            <person name="Tiedje J."/>
            <person name="Richardson P."/>
        </authorList>
    </citation>
    <scope>NUCLEOTIDE SEQUENCE [LARGE SCALE GENOMIC DNA]</scope>
    <source>
        <strain>PRwf-1</strain>
    </source>
</reference>
<sequence>MASFSTNEFKAGLKVMYDGNPCAIIDNEFVKPGKGQAFNRVKLRNLRTGKVLEQTFKSGESLEGADVVDTEMNYLYNDGEFWHFMHPETFEQLQADANAMADAKQWLKENGNDLCTITLFNGVPLSVTAPNFVELEIVETDPGVRGDTSGGGGKPARLETGAVVRVPLFVQQNEVVRVDTRTGDYQTRVSQ</sequence>
<protein>
    <recommendedName>
        <fullName evidence="1">Elongation factor P</fullName>
        <shortName evidence="1">EF-P</shortName>
    </recommendedName>
</protein>
<gene>
    <name evidence="1" type="primary">efp</name>
    <name type="ordered locus">PsycPRwf_0486</name>
</gene>
<dbReference type="EMBL" id="CP000713">
    <property type="protein sequence ID" value="ABQ93441.1"/>
    <property type="molecule type" value="Genomic_DNA"/>
</dbReference>
<dbReference type="SMR" id="A5WCQ0"/>
<dbReference type="STRING" id="349106.PsycPRwf_0486"/>
<dbReference type="KEGG" id="prw:PsycPRwf_0486"/>
<dbReference type="eggNOG" id="COG0231">
    <property type="taxonomic scope" value="Bacteria"/>
</dbReference>
<dbReference type="HOGENOM" id="CLU_074944_0_0_6"/>
<dbReference type="UniPathway" id="UPA00345"/>
<dbReference type="GO" id="GO:0005737">
    <property type="term" value="C:cytoplasm"/>
    <property type="evidence" value="ECO:0007669"/>
    <property type="project" value="UniProtKB-SubCell"/>
</dbReference>
<dbReference type="GO" id="GO:0003746">
    <property type="term" value="F:translation elongation factor activity"/>
    <property type="evidence" value="ECO:0007669"/>
    <property type="project" value="UniProtKB-UniRule"/>
</dbReference>
<dbReference type="GO" id="GO:0043043">
    <property type="term" value="P:peptide biosynthetic process"/>
    <property type="evidence" value="ECO:0007669"/>
    <property type="project" value="InterPro"/>
</dbReference>
<dbReference type="CDD" id="cd04470">
    <property type="entry name" value="S1_EF-P_repeat_1"/>
    <property type="match status" value="1"/>
</dbReference>
<dbReference type="CDD" id="cd05794">
    <property type="entry name" value="S1_EF-P_repeat_2"/>
    <property type="match status" value="1"/>
</dbReference>
<dbReference type="FunFam" id="2.30.30.30:FF:000003">
    <property type="entry name" value="Elongation factor P"/>
    <property type="match status" value="1"/>
</dbReference>
<dbReference type="FunFam" id="2.40.50.140:FF:000004">
    <property type="entry name" value="Elongation factor P"/>
    <property type="match status" value="1"/>
</dbReference>
<dbReference type="FunFam" id="2.40.50.140:FF:000009">
    <property type="entry name" value="Elongation factor P"/>
    <property type="match status" value="1"/>
</dbReference>
<dbReference type="Gene3D" id="2.30.30.30">
    <property type="match status" value="1"/>
</dbReference>
<dbReference type="Gene3D" id="2.40.50.140">
    <property type="entry name" value="Nucleic acid-binding proteins"/>
    <property type="match status" value="2"/>
</dbReference>
<dbReference type="HAMAP" id="MF_00141">
    <property type="entry name" value="EF_P"/>
    <property type="match status" value="1"/>
</dbReference>
<dbReference type="InterPro" id="IPR015365">
    <property type="entry name" value="Elong-fact-P_C"/>
</dbReference>
<dbReference type="InterPro" id="IPR012340">
    <property type="entry name" value="NA-bd_OB-fold"/>
</dbReference>
<dbReference type="InterPro" id="IPR014722">
    <property type="entry name" value="Rib_uL2_dom2"/>
</dbReference>
<dbReference type="InterPro" id="IPR020599">
    <property type="entry name" value="Transl_elong_fac_P/YeiP"/>
</dbReference>
<dbReference type="InterPro" id="IPR013185">
    <property type="entry name" value="Transl_elong_KOW-like"/>
</dbReference>
<dbReference type="InterPro" id="IPR001059">
    <property type="entry name" value="Transl_elong_P/YeiP_cen"/>
</dbReference>
<dbReference type="InterPro" id="IPR011768">
    <property type="entry name" value="Transl_elongation_fac_P"/>
</dbReference>
<dbReference type="InterPro" id="IPR008991">
    <property type="entry name" value="Translation_prot_SH3-like_sf"/>
</dbReference>
<dbReference type="NCBIfam" id="TIGR00038">
    <property type="entry name" value="efp"/>
    <property type="match status" value="1"/>
</dbReference>
<dbReference type="NCBIfam" id="NF001810">
    <property type="entry name" value="PRK00529.1"/>
    <property type="match status" value="1"/>
</dbReference>
<dbReference type="PANTHER" id="PTHR30053">
    <property type="entry name" value="ELONGATION FACTOR P"/>
    <property type="match status" value="1"/>
</dbReference>
<dbReference type="PANTHER" id="PTHR30053:SF12">
    <property type="entry name" value="ELONGATION FACTOR P (EF-P) FAMILY PROTEIN"/>
    <property type="match status" value="1"/>
</dbReference>
<dbReference type="Pfam" id="PF01132">
    <property type="entry name" value="EFP"/>
    <property type="match status" value="1"/>
</dbReference>
<dbReference type="Pfam" id="PF08207">
    <property type="entry name" value="EFP_N"/>
    <property type="match status" value="1"/>
</dbReference>
<dbReference type="Pfam" id="PF09285">
    <property type="entry name" value="Elong-fact-P_C"/>
    <property type="match status" value="1"/>
</dbReference>
<dbReference type="PIRSF" id="PIRSF005901">
    <property type="entry name" value="EF-P"/>
    <property type="match status" value="1"/>
</dbReference>
<dbReference type="SMART" id="SM01185">
    <property type="entry name" value="EFP"/>
    <property type="match status" value="1"/>
</dbReference>
<dbReference type="SMART" id="SM00841">
    <property type="entry name" value="Elong-fact-P_C"/>
    <property type="match status" value="1"/>
</dbReference>
<dbReference type="SUPFAM" id="SSF50249">
    <property type="entry name" value="Nucleic acid-binding proteins"/>
    <property type="match status" value="2"/>
</dbReference>
<dbReference type="SUPFAM" id="SSF50104">
    <property type="entry name" value="Translation proteins SH3-like domain"/>
    <property type="match status" value="1"/>
</dbReference>
<keyword id="KW-0963">Cytoplasm</keyword>
<keyword id="KW-0251">Elongation factor</keyword>
<keyword id="KW-0379">Hydroxylation</keyword>
<keyword id="KW-0648">Protein biosynthesis</keyword>
<proteinExistence type="inferred from homology"/>
<name>EFP_PSYWF</name>
<evidence type="ECO:0000255" key="1">
    <source>
        <dbReference type="HAMAP-Rule" id="MF_00141"/>
    </source>
</evidence>
<organism>
    <name type="scientific">Psychrobacter sp. (strain PRwf-1)</name>
    <dbReference type="NCBI Taxonomy" id="349106"/>
    <lineage>
        <taxon>Bacteria</taxon>
        <taxon>Pseudomonadati</taxon>
        <taxon>Pseudomonadota</taxon>
        <taxon>Gammaproteobacteria</taxon>
        <taxon>Moraxellales</taxon>
        <taxon>Moraxellaceae</taxon>
        <taxon>Psychrobacter</taxon>
    </lineage>
</organism>
<accession>A5WCQ0</accession>